<organism>
    <name type="scientific">Rickettsia conorii (strain ATCC VR-613 / Malish 7)</name>
    <dbReference type="NCBI Taxonomy" id="272944"/>
    <lineage>
        <taxon>Bacteria</taxon>
        <taxon>Pseudomonadati</taxon>
        <taxon>Pseudomonadota</taxon>
        <taxon>Alphaproteobacteria</taxon>
        <taxon>Rickettsiales</taxon>
        <taxon>Rickettsiaceae</taxon>
        <taxon>Rickettsieae</taxon>
        <taxon>Rickettsia</taxon>
        <taxon>spotted fever group</taxon>
    </lineage>
</organism>
<reference key="1">
    <citation type="journal article" date="2001" name="Science">
        <title>Mechanisms of evolution in Rickettsia conorii and R. prowazekii.</title>
        <authorList>
            <person name="Ogata H."/>
            <person name="Audic S."/>
            <person name="Renesto-Audiffren P."/>
            <person name="Fournier P.-E."/>
            <person name="Barbe V."/>
            <person name="Samson D."/>
            <person name="Roux V."/>
            <person name="Cossart P."/>
            <person name="Weissenbach J."/>
            <person name="Claverie J.-M."/>
            <person name="Raoult D."/>
        </authorList>
    </citation>
    <scope>NUCLEOTIDE SEQUENCE [LARGE SCALE GENOMIC DNA]</scope>
    <source>
        <strain>ATCC VR-613 / Malish 7</strain>
    </source>
</reference>
<accession>Q92HV4</accession>
<protein>
    <recommendedName>
        <fullName>ADP,ATP carrier protein 4</fullName>
    </recommendedName>
    <alternativeName>
        <fullName>ADP/ATP translocase 4</fullName>
    </alternativeName>
</protein>
<feature type="chain" id="PRO_0000286475" description="ADP,ATP carrier protein 4">
    <location>
        <begin position="1"/>
        <end position="511"/>
    </location>
</feature>
<feature type="transmembrane region" description="Helical" evidence="2">
    <location>
        <begin position="34"/>
        <end position="54"/>
    </location>
</feature>
<feature type="transmembrane region" description="Helical" evidence="2">
    <location>
        <begin position="70"/>
        <end position="90"/>
    </location>
</feature>
<feature type="transmembrane region" description="Helical" evidence="2">
    <location>
        <begin position="102"/>
        <end position="122"/>
    </location>
</feature>
<feature type="transmembrane region" description="Helical" evidence="2">
    <location>
        <begin position="157"/>
        <end position="177"/>
    </location>
</feature>
<feature type="transmembrane region" description="Helical" evidence="2">
    <location>
        <begin position="192"/>
        <end position="212"/>
    </location>
</feature>
<feature type="transmembrane region" description="Helical" evidence="2">
    <location>
        <begin position="231"/>
        <end position="251"/>
    </location>
</feature>
<feature type="transmembrane region" description="Helical" evidence="2">
    <location>
        <begin position="296"/>
        <end position="316"/>
    </location>
</feature>
<feature type="transmembrane region" description="Helical" evidence="2">
    <location>
        <begin position="330"/>
        <end position="350"/>
    </location>
</feature>
<feature type="transmembrane region" description="Helical" evidence="2">
    <location>
        <begin position="361"/>
        <end position="381"/>
    </location>
</feature>
<feature type="transmembrane region" description="Helical" evidence="2">
    <location>
        <begin position="390"/>
        <end position="410"/>
    </location>
</feature>
<feature type="transmembrane region" description="Helical" evidence="2">
    <location>
        <begin position="453"/>
        <end position="473"/>
    </location>
</feature>
<feature type="transmembrane region" description="Helical" evidence="2">
    <location>
        <begin position="476"/>
        <end position="496"/>
    </location>
</feature>
<keyword id="KW-0067">ATP-binding</keyword>
<keyword id="KW-1003">Cell membrane</keyword>
<keyword id="KW-0472">Membrane</keyword>
<keyword id="KW-0547">Nucleotide-binding</keyword>
<keyword id="KW-0812">Transmembrane</keyword>
<keyword id="KW-1133">Transmembrane helix</keyword>
<keyword id="KW-0813">Transport</keyword>
<comment type="function">
    <text evidence="1">Provides the rickettsial cell with host ATP in exchange for rickettsial ADP. This is an obligate exchange system. This energy acquiring activity is an important component of rickettsial parasitism (By similarity).</text>
</comment>
<comment type="subcellular location">
    <subcellularLocation>
        <location>Cell membrane</location>
        <topology>Multi-pass membrane protein</topology>
    </subcellularLocation>
</comment>
<comment type="similarity">
    <text evidence="3">Belongs to the ADP/ATP translocase tlc family.</text>
</comment>
<evidence type="ECO:0000250" key="1"/>
<evidence type="ECO:0000255" key="2"/>
<evidence type="ECO:0000305" key="3"/>
<proteinExistence type="inferred from homology"/>
<sequence>MTINPSNVENSSSKINSYFSKLTDYIWPIKRHEVSKFLFITLLMFCILFIQNLIRALKDSIVTTMIGAEIISFLKFWGVMPSAFLMTAIYVKLVNKMKAENIFYLIISIFLTFFALFAYVIFPNHEMLHFSPVTVQNLMASLPNLKWFIWLLSKWSFSLFYIIAELWPNVVFALLFWQFVNNITTVEESKRFYPLFGLLSQTGIYLAGQFLENLSNINDYVTNKFALQSSFHTLSIQIILTIVLILGIIAIKTFWLLNHKVLDKEHMALLRFKAKKKSMTIAESFQMLLSSRHIRLIATLLICYGIAINLVEGPWKAAATKIYKTPTEYAAFIGSYLSYTGVFTILFVVLGSNIVRRLGWFTAAVITPLIVFITGILFFAVNNFERFAGLIIANFILTDPALIAITIGAIQNVLSKSSKYTLFDSTKEMAYVPLDPEIKIKGKAAADVIGTKLGKSGSAFLQSLVFIILPSASYQSISTCLMIIFIITCLTWLWATKALNKEYKNSIKFSQ</sequence>
<name>TLCD_RICCN</name>
<dbReference type="EMBL" id="AE006914">
    <property type="protein sequence ID" value="AAL03204.1"/>
    <property type="molecule type" value="Genomic_DNA"/>
</dbReference>
<dbReference type="PIR" id="B97783">
    <property type="entry name" value="B97783"/>
</dbReference>
<dbReference type="RefSeq" id="WP_010977290.1">
    <property type="nucleotide sequence ID" value="NC_003103.1"/>
</dbReference>
<dbReference type="GeneID" id="927878"/>
<dbReference type="KEGG" id="rco:RC0666"/>
<dbReference type="PATRIC" id="fig|272944.4.peg.759"/>
<dbReference type="HOGENOM" id="CLU_023964_0_1_5"/>
<dbReference type="Proteomes" id="UP000000816">
    <property type="component" value="Chromosome"/>
</dbReference>
<dbReference type="GO" id="GO:0005886">
    <property type="term" value="C:plasma membrane"/>
    <property type="evidence" value="ECO:0007669"/>
    <property type="project" value="UniProtKB-SubCell"/>
</dbReference>
<dbReference type="GO" id="GO:0005524">
    <property type="term" value="F:ATP binding"/>
    <property type="evidence" value="ECO:0007669"/>
    <property type="project" value="UniProtKB-KW"/>
</dbReference>
<dbReference type="GO" id="GO:0005471">
    <property type="term" value="F:ATP:ADP antiporter activity"/>
    <property type="evidence" value="ECO:0007669"/>
    <property type="project" value="InterPro"/>
</dbReference>
<dbReference type="InterPro" id="IPR004667">
    <property type="entry name" value="ADP_ATP_car_bac_type"/>
</dbReference>
<dbReference type="NCBIfam" id="TIGR00769">
    <property type="entry name" value="AAA"/>
    <property type="match status" value="1"/>
</dbReference>
<dbReference type="PANTHER" id="PTHR31187">
    <property type="match status" value="1"/>
</dbReference>
<dbReference type="PANTHER" id="PTHR31187:SF1">
    <property type="entry name" value="ADP,ATP CARRIER PROTEIN 1"/>
    <property type="match status" value="1"/>
</dbReference>
<dbReference type="Pfam" id="PF03219">
    <property type="entry name" value="TLC"/>
    <property type="match status" value="1"/>
</dbReference>
<gene>
    <name type="primary">tlcD</name>
    <name type="synonym">tlc4</name>
    <name type="ordered locus">RC0666</name>
</gene>